<organism>
    <name type="scientific">Photobacterium profundum (strain SS9)</name>
    <dbReference type="NCBI Taxonomy" id="298386"/>
    <lineage>
        <taxon>Bacteria</taxon>
        <taxon>Pseudomonadati</taxon>
        <taxon>Pseudomonadota</taxon>
        <taxon>Gammaproteobacteria</taxon>
        <taxon>Vibrionales</taxon>
        <taxon>Vibrionaceae</taxon>
        <taxon>Photobacterium</taxon>
    </lineage>
</organism>
<feature type="chain" id="PRO_0000205922" description="Probable allantoicase">
    <location>
        <begin position="1"/>
        <end position="330"/>
    </location>
</feature>
<proteinExistence type="inferred from homology"/>
<gene>
    <name evidence="1" type="primary">alc</name>
    <name type="ordered locus">PBPRA2261</name>
</gene>
<comment type="catalytic activity">
    <reaction evidence="1">
        <text>allantoate + H2O = (S)-ureidoglycolate + urea</text>
        <dbReference type="Rhea" id="RHEA:11016"/>
        <dbReference type="ChEBI" id="CHEBI:15377"/>
        <dbReference type="ChEBI" id="CHEBI:16199"/>
        <dbReference type="ChEBI" id="CHEBI:17536"/>
        <dbReference type="ChEBI" id="CHEBI:57296"/>
        <dbReference type="EC" id="3.5.3.4"/>
    </reaction>
</comment>
<comment type="pathway">
    <text evidence="1">Nitrogen metabolism; (S)-allantoin degradation; (S)-ureidoglycolate from allantoate (aminidohydrolase route): step 1/1.</text>
</comment>
<comment type="similarity">
    <text evidence="1">Belongs to the allantoicase family.</text>
</comment>
<protein>
    <recommendedName>
        <fullName evidence="1">Probable allantoicase</fullName>
        <ecNumber evidence="1">3.5.3.4</ecNumber>
    </recommendedName>
    <alternativeName>
        <fullName evidence="1">Allantoate amidinohydrolase</fullName>
    </alternativeName>
</protein>
<name>ALLC_PHOPR</name>
<dbReference type="EC" id="3.5.3.4" evidence="1"/>
<dbReference type="EMBL" id="CR378670">
    <property type="protein sequence ID" value="CAG20647.1"/>
    <property type="molecule type" value="Genomic_DNA"/>
</dbReference>
<dbReference type="RefSeq" id="WP_011218937.1">
    <property type="nucleotide sequence ID" value="NC_006370.1"/>
</dbReference>
<dbReference type="SMR" id="Q6LPX9"/>
<dbReference type="STRING" id="298386.PBPRA2261"/>
<dbReference type="KEGG" id="ppr:PBPRA2261"/>
<dbReference type="eggNOG" id="COG4266">
    <property type="taxonomic scope" value="Bacteria"/>
</dbReference>
<dbReference type="HOGENOM" id="CLU_038797_1_2_6"/>
<dbReference type="UniPathway" id="UPA00395">
    <property type="reaction ID" value="UER00654"/>
</dbReference>
<dbReference type="Proteomes" id="UP000000593">
    <property type="component" value="Chromosome 1"/>
</dbReference>
<dbReference type="GO" id="GO:0004037">
    <property type="term" value="F:allantoicase activity"/>
    <property type="evidence" value="ECO:0007669"/>
    <property type="project" value="UniProtKB-UniRule"/>
</dbReference>
<dbReference type="GO" id="GO:0000256">
    <property type="term" value="P:allantoin catabolic process"/>
    <property type="evidence" value="ECO:0007669"/>
    <property type="project" value="UniProtKB-UniRule"/>
</dbReference>
<dbReference type="GO" id="GO:0006144">
    <property type="term" value="P:purine nucleobase metabolic process"/>
    <property type="evidence" value="ECO:0007669"/>
    <property type="project" value="UniProtKB-KW"/>
</dbReference>
<dbReference type="FunFam" id="2.60.120.260:FF:000059">
    <property type="entry name" value="Probable allantoicase"/>
    <property type="match status" value="1"/>
</dbReference>
<dbReference type="FunFam" id="2.60.120.260:FF:000090">
    <property type="entry name" value="Probable allantoicase"/>
    <property type="match status" value="1"/>
</dbReference>
<dbReference type="Gene3D" id="2.60.120.260">
    <property type="entry name" value="Galactose-binding domain-like"/>
    <property type="match status" value="2"/>
</dbReference>
<dbReference type="HAMAP" id="MF_00813">
    <property type="entry name" value="Allantoicase"/>
    <property type="match status" value="1"/>
</dbReference>
<dbReference type="InterPro" id="IPR005164">
    <property type="entry name" value="Allantoicase"/>
</dbReference>
<dbReference type="InterPro" id="IPR015908">
    <property type="entry name" value="Allantoicase_dom"/>
</dbReference>
<dbReference type="InterPro" id="IPR008979">
    <property type="entry name" value="Galactose-bd-like_sf"/>
</dbReference>
<dbReference type="NCBIfam" id="TIGR02961">
    <property type="entry name" value="allantoicase"/>
    <property type="match status" value="1"/>
</dbReference>
<dbReference type="PANTHER" id="PTHR12045">
    <property type="entry name" value="ALLANTOICASE"/>
    <property type="match status" value="1"/>
</dbReference>
<dbReference type="PANTHER" id="PTHR12045:SF3">
    <property type="entry name" value="INACTIVE ALLANTOICASE-RELATED"/>
    <property type="match status" value="1"/>
</dbReference>
<dbReference type="Pfam" id="PF03561">
    <property type="entry name" value="Allantoicase"/>
    <property type="match status" value="2"/>
</dbReference>
<dbReference type="PIRSF" id="PIRSF016516">
    <property type="entry name" value="Allantoicase"/>
    <property type="match status" value="1"/>
</dbReference>
<dbReference type="SUPFAM" id="SSF49785">
    <property type="entry name" value="Galactose-binding domain-like"/>
    <property type="match status" value="2"/>
</dbReference>
<reference key="1">
    <citation type="journal article" date="2005" name="Science">
        <title>Life at depth: Photobacterium profundum genome sequence and expression analysis.</title>
        <authorList>
            <person name="Vezzi A."/>
            <person name="Campanaro S."/>
            <person name="D'Angelo M."/>
            <person name="Simonato F."/>
            <person name="Vitulo N."/>
            <person name="Lauro F.M."/>
            <person name="Cestaro A."/>
            <person name="Malacrida G."/>
            <person name="Simionati B."/>
            <person name="Cannata N."/>
            <person name="Romualdi C."/>
            <person name="Bartlett D.H."/>
            <person name="Valle G."/>
        </authorList>
    </citation>
    <scope>NUCLEOTIDE SEQUENCE [LARGE SCALE GENOMIC DNA]</scope>
    <source>
        <strain>ATCC BAA-1253 / SS9</strain>
    </source>
</reference>
<keyword id="KW-0378">Hydrolase</keyword>
<keyword id="KW-0659">Purine metabolism</keyword>
<keyword id="KW-1185">Reference proteome</keyword>
<evidence type="ECO:0000255" key="1">
    <source>
        <dbReference type="HAMAP-Rule" id="MF_00813"/>
    </source>
</evidence>
<sequence length="330" mass="36577">MEKALNFEQYVNLADPKLGAEAIFATDDFFADKSRLIRTEAAEWKEDLYDDNGKWMDGWESRRKRSEGYDFCVVRLGLAGTIAGLDIDTSFFTGNFPPSASVDACYSPDGEPSDSTEWQEILSSQSLQGDSHHLHALDNEQVFTHVRLNIYPDGGVARLRVYGRPSVNWDQIGIDQEVDLAAVVNGGRALACSDEHFGKKSNILGPGRGENMGDGWETARRRTPGNDWVIVALGRPGKIGKVVVDTAHFKGNFPDSCSIQAAYVQGGTDDQVETQSLFWRELMPSQKLSAHNIQEFVEQVNDLGAVTHVRLNIFPDGGISRLRLFGFKSE</sequence>
<accession>Q6LPX9</accession>